<feature type="signal peptide" evidence="1">
    <location>
        <begin position="1"/>
        <end position="18"/>
    </location>
</feature>
<feature type="chain" id="PRO_0000248213" description="Tensin-4">
    <location>
        <begin position="19"/>
        <end position="715"/>
    </location>
</feature>
<feature type="domain" description="SH2" evidence="2">
    <location>
        <begin position="449"/>
        <end position="556"/>
    </location>
</feature>
<feature type="domain" description="PTB" evidence="1">
    <location>
        <begin position="582"/>
        <end position="705"/>
    </location>
</feature>
<feature type="region of interest" description="Disordered" evidence="3">
    <location>
        <begin position="159"/>
        <end position="183"/>
    </location>
</feature>
<feature type="region of interest" description="Disordered" evidence="3">
    <location>
        <begin position="195"/>
        <end position="251"/>
    </location>
</feature>
<feature type="region of interest" description="Disordered" evidence="3">
    <location>
        <begin position="291"/>
        <end position="364"/>
    </location>
</feature>
<feature type="region of interest" description="Disordered" evidence="3">
    <location>
        <begin position="376"/>
        <end position="435"/>
    </location>
</feature>
<feature type="compositionally biased region" description="Polar residues" evidence="3">
    <location>
        <begin position="197"/>
        <end position="206"/>
    </location>
</feature>
<feature type="compositionally biased region" description="Low complexity" evidence="3">
    <location>
        <begin position="291"/>
        <end position="325"/>
    </location>
</feature>
<feature type="site" description="Cleavage; by caspase-3" evidence="6">
    <location>
        <begin position="570"/>
        <end position="571"/>
    </location>
</feature>
<feature type="modified residue" description="Phosphoserine" evidence="17">
    <location>
        <position position="82"/>
    </location>
</feature>
<feature type="modified residue" description="Phosphoserine" evidence="17">
    <location>
        <position position="248"/>
    </location>
</feature>
<feature type="sequence variant" id="VAR_027264" description="In dbSNP:rs3764424." evidence="4">
    <original>L</original>
    <variation>P</variation>
    <location>
        <position position="179"/>
    </location>
</feature>
<feature type="sequence variant" id="VAR_055292" description="In dbSNP:rs33923045.">
    <original>T</original>
    <variation>K</variation>
    <location>
        <position position="327"/>
    </location>
</feature>
<feature type="sequence variant" id="VAR_027265" description="In dbSNP:rs2290207." evidence="4 5">
    <original>S</original>
    <variation>N</variation>
    <location>
        <position position="498"/>
    </location>
</feature>
<feature type="sequence variant" id="VAR_036515" description="In a colorectal cancer sample; somatic mutation; dbSNP:rs148022611." evidence="7">
    <original>R</original>
    <variation>C</variation>
    <location>
        <position position="642"/>
    </location>
</feature>
<feature type="mutagenesis site" description="Abolishes focal adhesion localization; when associated with A-474." evidence="15">
    <location>
        <begin position="100"/>
        <end position="118"/>
    </location>
</feature>
<feature type="mutagenesis site" description="Abolishes interaction with DLC1. Abolishes interaction with CBL following EGF stimulation. Loss of ability to reduce ubiquitination of activated EGFR. Significant decrease in interaction with MET, faster MET trafficking to the lysosome and significant increase in MET turnover. Significant inhibition of basal and HGF-stimulated cell migration. No effect on focal adhesion localization. Abolishes focal adhesion localization; when associated with 100-F--L-118 DEL." evidence="8 12 13 15">
    <original>R</original>
    <variation>A</variation>
    <location>
        <position position="474"/>
    </location>
</feature>
<feature type="mutagenesis site" description="No effect on cleavage by caspase-3." evidence="6">
    <original>D</original>
    <variation>A</variation>
    <location>
        <position position="506"/>
    </location>
</feature>
<feature type="mutagenesis site" description="Abolishes cleavage by caspase-3." evidence="6">
    <original>D</original>
    <variation>A</variation>
    <location>
        <position position="570"/>
    </location>
</feature>
<feature type="mutagenesis site" description="Abolishes interaction with ITGB1. Does not affect interaction with CBL following EGF stimulation." evidence="9 12">
    <original>R</original>
    <variation>A</variation>
    <location>
        <position position="650"/>
    </location>
</feature>
<feature type="sequence conflict" description="In Ref. 1; AAN32666." evidence="16" ref="1">
    <original>G</original>
    <variation>W</variation>
    <location>
        <position position="163"/>
    </location>
</feature>
<feature type="sequence conflict" description="In Ref. 1; AAN32666 and 3; BAB55413." evidence="16" ref="1 3">
    <original>S</original>
    <variation>I</variation>
    <location>
        <position position="360"/>
    </location>
</feature>
<feature type="sequence conflict" description="In Ref. 1; AAN32666 and 3; BAB55413." evidence="16" ref="1 3">
    <original>K</original>
    <variation>E</variation>
    <location>
        <position position="623"/>
    </location>
</feature>
<evidence type="ECO:0000255" key="1"/>
<evidence type="ECO:0000255" key="2">
    <source>
        <dbReference type="PROSITE-ProRule" id="PRU00191"/>
    </source>
</evidence>
<evidence type="ECO:0000256" key="3">
    <source>
        <dbReference type="SAM" id="MobiDB-lite"/>
    </source>
</evidence>
<evidence type="ECO:0000269" key="4">
    <source>
    </source>
</evidence>
<evidence type="ECO:0000269" key="5">
    <source>
    </source>
</evidence>
<evidence type="ECO:0000269" key="6">
    <source>
    </source>
</evidence>
<evidence type="ECO:0000269" key="7">
    <source>
    </source>
</evidence>
<evidence type="ECO:0000269" key="8">
    <source>
    </source>
</evidence>
<evidence type="ECO:0000269" key="9">
    <source>
    </source>
</evidence>
<evidence type="ECO:0000269" key="10">
    <source>
    </source>
</evidence>
<evidence type="ECO:0000269" key="11">
    <source>
    </source>
</evidence>
<evidence type="ECO:0000269" key="12">
    <source>
    </source>
</evidence>
<evidence type="ECO:0000269" key="13">
    <source>
    </source>
</evidence>
<evidence type="ECO:0000269" key="14">
    <source>
    </source>
</evidence>
<evidence type="ECO:0000269" key="15">
    <source>
    </source>
</evidence>
<evidence type="ECO:0000305" key="16"/>
<evidence type="ECO:0007744" key="17">
    <source>
    </source>
</evidence>
<proteinExistence type="evidence at protein level"/>
<dbReference type="EMBL" id="AF417488">
    <property type="protein sequence ID" value="AAN32666.1"/>
    <property type="molecule type" value="mRNA"/>
</dbReference>
<dbReference type="EMBL" id="AF370421">
    <property type="protein sequence ID" value="AAQ15257.1"/>
    <property type="status" value="ALT_FRAME"/>
    <property type="molecule type" value="mRNA"/>
</dbReference>
<dbReference type="EMBL" id="AK027856">
    <property type="protein sequence ID" value="BAB55413.1"/>
    <property type="molecule type" value="mRNA"/>
</dbReference>
<dbReference type="EMBL" id="AC018629">
    <property type="status" value="NOT_ANNOTATED_CDS"/>
    <property type="molecule type" value="Genomic_DNA"/>
</dbReference>
<dbReference type="EMBL" id="BC018706">
    <property type="protein sequence ID" value="AAH18706.1"/>
    <property type="molecule type" value="mRNA"/>
</dbReference>
<dbReference type="CCDS" id="CCDS11368.1"/>
<dbReference type="RefSeq" id="NP_116254.4">
    <property type="nucleotide sequence ID" value="NM_032865.5"/>
</dbReference>
<dbReference type="SMR" id="Q8IZW8"/>
<dbReference type="BioGRID" id="124383">
    <property type="interactions" value="44"/>
</dbReference>
<dbReference type="FunCoup" id="Q8IZW8">
    <property type="interactions" value="132"/>
</dbReference>
<dbReference type="IntAct" id="Q8IZW8">
    <property type="interactions" value="36"/>
</dbReference>
<dbReference type="MINT" id="Q8IZW8"/>
<dbReference type="STRING" id="9606.ENSP00000254051"/>
<dbReference type="GlyGen" id="Q8IZW8">
    <property type="glycosylation" value="4 sites, 1 O-linked glycan (2 sites)"/>
</dbReference>
<dbReference type="iPTMnet" id="Q8IZW8"/>
<dbReference type="PhosphoSitePlus" id="Q8IZW8"/>
<dbReference type="BioMuta" id="TNS4"/>
<dbReference type="DMDM" id="229463025"/>
<dbReference type="jPOST" id="Q8IZW8"/>
<dbReference type="MassIVE" id="Q8IZW8"/>
<dbReference type="PaxDb" id="9606-ENSP00000254051"/>
<dbReference type="PeptideAtlas" id="Q8IZW8"/>
<dbReference type="ProteomicsDB" id="71438"/>
<dbReference type="Pumba" id="Q8IZW8"/>
<dbReference type="Antibodypedia" id="16494">
    <property type="antibodies" value="221 antibodies from 27 providers"/>
</dbReference>
<dbReference type="DNASU" id="84951"/>
<dbReference type="Ensembl" id="ENST00000254051.11">
    <property type="protein sequence ID" value="ENSP00000254051.6"/>
    <property type="gene ID" value="ENSG00000131746.13"/>
</dbReference>
<dbReference type="GeneID" id="84951"/>
<dbReference type="KEGG" id="hsa:84951"/>
<dbReference type="MANE-Select" id="ENST00000254051.11">
    <property type="protein sequence ID" value="ENSP00000254051.6"/>
    <property type="RefSeq nucleotide sequence ID" value="NM_032865.6"/>
    <property type="RefSeq protein sequence ID" value="NP_116254.4"/>
</dbReference>
<dbReference type="UCSC" id="uc010cxb.4">
    <property type="organism name" value="human"/>
</dbReference>
<dbReference type="AGR" id="HGNC:24352"/>
<dbReference type="CTD" id="84951"/>
<dbReference type="DisGeNET" id="84951"/>
<dbReference type="GeneCards" id="TNS4"/>
<dbReference type="HGNC" id="HGNC:24352">
    <property type="gene designation" value="TNS4"/>
</dbReference>
<dbReference type="HPA" id="ENSG00000131746">
    <property type="expression patterns" value="Tissue enhanced (skin, vagina)"/>
</dbReference>
<dbReference type="MIM" id="608385">
    <property type="type" value="gene"/>
</dbReference>
<dbReference type="neXtProt" id="NX_Q8IZW8"/>
<dbReference type="OpenTargets" id="ENSG00000131746"/>
<dbReference type="PharmGKB" id="PA142670717"/>
<dbReference type="VEuPathDB" id="HostDB:ENSG00000131746"/>
<dbReference type="eggNOG" id="KOG1930">
    <property type="taxonomic scope" value="Eukaryota"/>
</dbReference>
<dbReference type="GeneTree" id="ENSGT00940000160142"/>
<dbReference type="HOGENOM" id="CLU_398985_0_0_1"/>
<dbReference type="InParanoid" id="Q8IZW8"/>
<dbReference type="OMA" id="SQPSMKF"/>
<dbReference type="OrthoDB" id="6273691at2759"/>
<dbReference type="PAN-GO" id="Q8IZW8">
    <property type="GO annotations" value="1 GO annotation based on evolutionary models"/>
</dbReference>
<dbReference type="PhylomeDB" id="Q8IZW8"/>
<dbReference type="TreeFam" id="TF315996"/>
<dbReference type="PathwayCommons" id="Q8IZW8"/>
<dbReference type="Reactome" id="R-HSA-8875513">
    <property type="pathway name" value="MET interacts with TNS proteins"/>
</dbReference>
<dbReference type="SignaLink" id="Q8IZW8"/>
<dbReference type="BioGRID-ORCS" id="84951">
    <property type="hits" value="11 hits in 1150 CRISPR screens"/>
</dbReference>
<dbReference type="ChiTaRS" id="TNS4">
    <property type="organism name" value="human"/>
</dbReference>
<dbReference type="GeneWiki" id="TNS4"/>
<dbReference type="GenomeRNAi" id="84951"/>
<dbReference type="Pharos" id="Q8IZW8">
    <property type="development level" value="Tbio"/>
</dbReference>
<dbReference type="PRO" id="PR:Q8IZW8"/>
<dbReference type="Proteomes" id="UP000005640">
    <property type="component" value="Chromosome 17"/>
</dbReference>
<dbReference type="RNAct" id="Q8IZW8">
    <property type="molecule type" value="protein"/>
</dbReference>
<dbReference type="Bgee" id="ENSG00000131746">
    <property type="expression patterns" value="Expressed in skin of abdomen and 146 other cell types or tissues"/>
</dbReference>
<dbReference type="ExpressionAtlas" id="Q8IZW8">
    <property type="expression patterns" value="baseline and differential"/>
</dbReference>
<dbReference type="GO" id="GO:0005856">
    <property type="term" value="C:cytoskeleton"/>
    <property type="evidence" value="ECO:0007669"/>
    <property type="project" value="UniProtKB-SubCell"/>
</dbReference>
<dbReference type="GO" id="GO:0005829">
    <property type="term" value="C:cytosol"/>
    <property type="evidence" value="ECO:0000314"/>
    <property type="project" value="HPA"/>
</dbReference>
<dbReference type="GO" id="GO:0005925">
    <property type="term" value="C:focal adhesion"/>
    <property type="evidence" value="ECO:0000314"/>
    <property type="project" value="UniProtKB"/>
</dbReference>
<dbReference type="GO" id="GO:0003779">
    <property type="term" value="F:actin binding"/>
    <property type="evidence" value="ECO:0007669"/>
    <property type="project" value="UniProtKB-KW"/>
</dbReference>
<dbReference type="GO" id="GO:0008104">
    <property type="term" value="P:protein localization"/>
    <property type="evidence" value="ECO:0000314"/>
    <property type="project" value="UniProtKB"/>
</dbReference>
<dbReference type="CDD" id="cd01213">
    <property type="entry name" value="PTB_tensin"/>
    <property type="match status" value="1"/>
</dbReference>
<dbReference type="FunFam" id="2.30.29.30:FF:000039">
    <property type="entry name" value="Tensin 1"/>
    <property type="match status" value="1"/>
</dbReference>
<dbReference type="FunFam" id="3.30.505.10:FF:000002">
    <property type="entry name" value="Tensin 1"/>
    <property type="match status" value="1"/>
</dbReference>
<dbReference type="Gene3D" id="2.30.29.30">
    <property type="entry name" value="Pleckstrin-homology domain (PH domain)/Phosphotyrosine-binding domain (PTB)"/>
    <property type="match status" value="1"/>
</dbReference>
<dbReference type="Gene3D" id="3.30.505.10">
    <property type="entry name" value="SH2 domain"/>
    <property type="match status" value="1"/>
</dbReference>
<dbReference type="InterPro" id="IPR011993">
    <property type="entry name" value="PH-like_dom_sf"/>
</dbReference>
<dbReference type="InterPro" id="IPR013625">
    <property type="entry name" value="PTB"/>
</dbReference>
<dbReference type="InterPro" id="IPR006020">
    <property type="entry name" value="PTB/PI_dom"/>
</dbReference>
<dbReference type="InterPro" id="IPR000980">
    <property type="entry name" value="SH2"/>
</dbReference>
<dbReference type="InterPro" id="IPR036860">
    <property type="entry name" value="SH2_dom_sf"/>
</dbReference>
<dbReference type="InterPro" id="IPR033929">
    <property type="entry name" value="Tensin_PTB"/>
</dbReference>
<dbReference type="InterPro" id="IPR051484">
    <property type="entry name" value="Tensin_PTEN_phosphatase"/>
</dbReference>
<dbReference type="PANTHER" id="PTHR45734">
    <property type="entry name" value="TENSIN"/>
    <property type="match status" value="1"/>
</dbReference>
<dbReference type="PANTHER" id="PTHR45734:SF6">
    <property type="entry name" value="TENSIN-4"/>
    <property type="match status" value="1"/>
</dbReference>
<dbReference type="Pfam" id="PF08416">
    <property type="entry name" value="PTB"/>
    <property type="match status" value="1"/>
</dbReference>
<dbReference type="Pfam" id="PF00017">
    <property type="entry name" value="SH2"/>
    <property type="match status" value="1"/>
</dbReference>
<dbReference type="SMART" id="SM00462">
    <property type="entry name" value="PTB"/>
    <property type="match status" value="1"/>
</dbReference>
<dbReference type="SMART" id="SM00252">
    <property type="entry name" value="SH2"/>
    <property type="match status" value="1"/>
</dbReference>
<dbReference type="SUPFAM" id="SSF50729">
    <property type="entry name" value="PH domain-like"/>
    <property type="match status" value="1"/>
</dbReference>
<dbReference type="SUPFAM" id="SSF55550">
    <property type="entry name" value="SH2 domain"/>
    <property type="match status" value="1"/>
</dbReference>
<dbReference type="PROSITE" id="PS50001">
    <property type="entry name" value="SH2"/>
    <property type="match status" value="1"/>
</dbReference>
<reference key="1">
    <citation type="journal article" date="2002" name="Cancer Res.">
        <title>Cten, a COOH-terminal tensin-like protein with prostate restricted expression, is down-regulated in prostate cancer.</title>
        <authorList>
            <person name="Lo S.H."/>
            <person name="Lo T.B."/>
        </authorList>
    </citation>
    <scope>NUCLEOTIDE SEQUENCE [MRNA]</scope>
    <scope>SUBCELLULAR LOCATION</scope>
    <scope>TISSUE SPECIFICITY</scope>
    <scope>VARIANTS PRO-179 AND ASN-498</scope>
</reference>
<reference key="2">
    <citation type="journal article" date="2004" name="Proc. Natl. Acad. Sci. U.S.A.">
        <title>Large-scale cDNA transfection screening for genes related to cancer development and progression.</title>
        <authorList>
            <person name="Wan D."/>
            <person name="Gong Y."/>
            <person name="Qin W."/>
            <person name="Zhang P."/>
            <person name="Li J."/>
            <person name="Wei L."/>
            <person name="Zhou X."/>
            <person name="Li H."/>
            <person name="Qiu X."/>
            <person name="Zhong F."/>
            <person name="He L."/>
            <person name="Yu J."/>
            <person name="Yao G."/>
            <person name="Jiang H."/>
            <person name="Qian L."/>
            <person name="Yu Y."/>
            <person name="Shu H."/>
            <person name="Chen X."/>
            <person name="Xu H."/>
            <person name="Guo M."/>
            <person name="Pan Z."/>
            <person name="Chen Y."/>
            <person name="Ge C."/>
            <person name="Yang S."/>
            <person name="Gu J."/>
        </authorList>
    </citation>
    <scope>NUCLEOTIDE SEQUENCE [LARGE SCALE MRNA]</scope>
</reference>
<reference key="3">
    <citation type="journal article" date="2004" name="Nat. Genet.">
        <title>Complete sequencing and characterization of 21,243 full-length human cDNAs.</title>
        <authorList>
            <person name="Ota T."/>
            <person name="Suzuki Y."/>
            <person name="Nishikawa T."/>
            <person name="Otsuki T."/>
            <person name="Sugiyama T."/>
            <person name="Irie R."/>
            <person name="Wakamatsu A."/>
            <person name="Hayashi K."/>
            <person name="Sato H."/>
            <person name="Nagai K."/>
            <person name="Kimura K."/>
            <person name="Makita H."/>
            <person name="Sekine M."/>
            <person name="Obayashi M."/>
            <person name="Nishi T."/>
            <person name="Shibahara T."/>
            <person name="Tanaka T."/>
            <person name="Ishii S."/>
            <person name="Yamamoto J."/>
            <person name="Saito K."/>
            <person name="Kawai Y."/>
            <person name="Isono Y."/>
            <person name="Nakamura Y."/>
            <person name="Nagahari K."/>
            <person name="Murakami K."/>
            <person name="Yasuda T."/>
            <person name="Iwayanagi T."/>
            <person name="Wagatsuma M."/>
            <person name="Shiratori A."/>
            <person name="Sudo H."/>
            <person name="Hosoiri T."/>
            <person name="Kaku Y."/>
            <person name="Kodaira H."/>
            <person name="Kondo H."/>
            <person name="Sugawara M."/>
            <person name="Takahashi M."/>
            <person name="Kanda K."/>
            <person name="Yokoi T."/>
            <person name="Furuya T."/>
            <person name="Kikkawa E."/>
            <person name="Omura Y."/>
            <person name="Abe K."/>
            <person name="Kamihara K."/>
            <person name="Katsuta N."/>
            <person name="Sato K."/>
            <person name="Tanikawa M."/>
            <person name="Yamazaki M."/>
            <person name="Ninomiya K."/>
            <person name="Ishibashi T."/>
            <person name="Yamashita H."/>
            <person name="Murakawa K."/>
            <person name="Fujimori K."/>
            <person name="Tanai H."/>
            <person name="Kimata M."/>
            <person name="Watanabe M."/>
            <person name="Hiraoka S."/>
            <person name="Chiba Y."/>
            <person name="Ishida S."/>
            <person name="Ono Y."/>
            <person name="Takiguchi S."/>
            <person name="Watanabe S."/>
            <person name="Yosida M."/>
            <person name="Hotuta T."/>
            <person name="Kusano J."/>
            <person name="Kanehori K."/>
            <person name="Takahashi-Fujii A."/>
            <person name="Hara H."/>
            <person name="Tanase T.-O."/>
            <person name="Nomura Y."/>
            <person name="Togiya S."/>
            <person name="Komai F."/>
            <person name="Hara R."/>
            <person name="Takeuchi K."/>
            <person name="Arita M."/>
            <person name="Imose N."/>
            <person name="Musashino K."/>
            <person name="Yuuki H."/>
            <person name="Oshima A."/>
            <person name="Sasaki N."/>
            <person name="Aotsuka S."/>
            <person name="Yoshikawa Y."/>
            <person name="Matsunawa H."/>
            <person name="Ichihara T."/>
            <person name="Shiohata N."/>
            <person name="Sano S."/>
            <person name="Moriya S."/>
            <person name="Momiyama H."/>
            <person name="Satoh N."/>
            <person name="Takami S."/>
            <person name="Terashima Y."/>
            <person name="Suzuki O."/>
            <person name="Nakagawa S."/>
            <person name="Senoh A."/>
            <person name="Mizoguchi H."/>
            <person name="Goto Y."/>
            <person name="Shimizu F."/>
            <person name="Wakebe H."/>
            <person name="Hishigaki H."/>
            <person name="Watanabe T."/>
            <person name="Sugiyama A."/>
            <person name="Takemoto M."/>
            <person name="Kawakami B."/>
            <person name="Yamazaki M."/>
            <person name="Watanabe K."/>
            <person name="Kumagai A."/>
            <person name="Itakura S."/>
            <person name="Fukuzumi Y."/>
            <person name="Fujimori Y."/>
            <person name="Komiyama M."/>
            <person name="Tashiro H."/>
            <person name="Tanigami A."/>
            <person name="Fujiwara T."/>
            <person name="Ono T."/>
            <person name="Yamada K."/>
            <person name="Fujii Y."/>
            <person name="Ozaki K."/>
            <person name="Hirao M."/>
            <person name="Ohmori Y."/>
            <person name="Kawabata A."/>
            <person name="Hikiji T."/>
            <person name="Kobatake N."/>
            <person name="Inagaki H."/>
            <person name="Ikema Y."/>
            <person name="Okamoto S."/>
            <person name="Okitani R."/>
            <person name="Kawakami T."/>
            <person name="Noguchi S."/>
            <person name="Itoh T."/>
            <person name="Shigeta K."/>
            <person name="Senba T."/>
            <person name="Matsumura K."/>
            <person name="Nakajima Y."/>
            <person name="Mizuno T."/>
            <person name="Morinaga M."/>
            <person name="Sasaki M."/>
            <person name="Togashi T."/>
            <person name="Oyama M."/>
            <person name="Hata H."/>
            <person name="Watanabe M."/>
            <person name="Komatsu T."/>
            <person name="Mizushima-Sugano J."/>
            <person name="Satoh T."/>
            <person name="Shirai Y."/>
            <person name="Takahashi Y."/>
            <person name="Nakagawa K."/>
            <person name="Okumura K."/>
            <person name="Nagase T."/>
            <person name="Nomura N."/>
            <person name="Kikuchi H."/>
            <person name="Masuho Y."/>
            <person name="Yamashita R."/>
            <person name="Nakai K."/>
            <person name="Yada T."/>
            <person name="Nakamura Y."/>
            <person name="Ohara O."/>
            <person name="Isogai T."/>
            <person name="Sugano S."/>
        </authorList>
    </citation>
    <scope>NUCLEOTIDE SEQUENCE [LARGE SCALE MRNA]</scope>
    <scope>VARIANT ASN-498</scope>
    <source>
        <tissue>Placenta</tissue>
    </source>
</reference>
<reference key="4">
    <citation type="journal article" date="2006" name="Nature">
        <title>DNA sequence of human chromosome 17 and analysis of rearrangement in the human lineage.</title>
        <authorList>
            <person name="Zody M.C."/>
            <person name="Garber M."/>
            <person name="Adams D.J."/>
            <person name="Sharpe T."/>
            <person name="Harrow J."/>
            <person name="Lupski J.R."/>
            <person name="Nicholson C."/>
            <person name="Searle S.M."/>
            <person name="Wilming L."/>
            <person name="Young S.K."/>
            <person name="Abouelleil A."/>
            <person name="Allen N.R."/>
            <person name="Bi W."/>
            <person name="Bloom T."/>
            <person name="Borowsky M.L."/>
            <person name="Bugalter B.E."/>
            <person name="Butler J."/>
            <person name="Chang J.L."/>
            <person name="Chen C.-K."/>
            <person name="Cook A."/>
            <person name="Corum B."/>
            <person name="Cuomo C.A."/>
            <person name="de Jong P.J."/>
            <person name="DeCaprio D."/>
            <person name="Dewar K."/>
            <person name="FitzGerald M."/>
            <person name="Gilbert J."/>
            <person name="Gibson R."/>
            <person name="Gnerre S."/>
            <person name="Goldstein S."/>
            <person name="Grafham D.V."/>
            <person name="Grocock R."/>
            <person name="Hafez N."/>
            <person name="Hagopian D.S."/>
            <person name="Hart E."/>
            <person name="Norman C.H."/>
            <person name="Humphray S."/>
            <person name="Jaffe D.B."/>
            <person name="Jones M."/>
            <person name="Kamal M."/>
            <person name="Khodiyar V.K."/>
            <person name="LaButti K."/>
            <person name="Laird G."/>
            <person name="Lehoczky J."/>
            <person name="Liu X."/>
            <person name="Lokyitsang T."/>
            <person name="Loveland J."/>
            <person name="Lui A."/>
            <person name="Macdonald P."/>
            <person name="Major J.E."/>
            <person name="Matthews L."/>
            <person name="Mauceli E."/>
            <person name="McCarroll S.A."/>
            <person name="Mihalev A.H."/>
            <person name="Mudge J."/>
            <person name="Nguyen C."/>
            <person name="Nicol R."/>
            <person name="O'Leary S.B."/>
            <person name="Osoegawa K."/>
            <person name="Schwartz D.C."/>
            <person name="Shaw-Smith C."/>
            <person name="Stankiewicz P."/>
            <person name="Steward C."/>
            <person name="Swarbreck D."/>
            <person name="Venkataraman V."/>
            <person name="Whittaker C.A."/>
            <person name="Yang X."/>
            <person name="Zimmer A.R."/>
            <person name="Bradley A."/>
            <person name="Hubbard T."/>
            <person name="Birren B.W."/>
            <person name="Rogers J."/>
            <person name="Lander E.S."/>
            <person name="Nusbaum C."/>
        </authorList>
    </citation>
    <scope>NUCLEOTIDE SEQUENCE [LARGE SCALE GENOMIC DNA]</scope>
</reference>
<reference key="5">
    <citation type="journal article" date="2004" name="Genome Res.">
        <title>The status, quality, and expansion of the NIH full-length cDNA project: the Mammalian Gene Collection (MGC).</title>
        <authorList>
            <consortium name="The MGC Project Team"/>
        </authorList>
    </citation>
    <scope>NUCLEOTIDE SEQUENCE [LARGE SCALE MRNA]</scope>
    <source>
        <tissue>Brain</tissue>
    </source>
</reference>
<reference key="6">
    <citation type="journal article" date="2005" name="Oncogene">
        <title>Cleavage of cten by caspase-3 during apoptosis.</title>
        <authorList>
            <person name="Lo S.-S."/>
            <person name="Lo S.H."/>
            <person name="Lo S.H."/>
        </authorList>
    </citation>
    <scope>CLEAVAGE BY CASPASE-3</scope>
    <scope>MUTAGENESIS OF ASP-506 AND ASP-570</scope>
</reference>
<reference key="7">
    <citation type="journal article" date="2007" name="J. Cell Biol.">
        <title>The phosphotyrosine-independent interaction of DLC-1 and the SH2 domain of cten regulates focal adhesion localization and growth suppression activity of DLC-1.</title>
        <authorList>
            <person name="Liao Y.C."/>
            <person name="Si L."/>
            <person name="deVere White R.W."/>
            <person name="Lo S.H."/>
        </authorList>
    </citation>
    <scope>INTERACTION WITH DLC1</scope>
    <scope>SUBCELLULAR LOCATION</scope>
    <scope>MUTAGENESIS OF ARG-474</scope>
</reference>
<reference key="8">
    <citation type="journal article" date="2007" name="Nat. Cell Biol.">
        <title>A reciprocal tensin-3-cten switch mediates EGF-driven mammary cell migration.</title>
        <authorList>
            <person name="Katz M."/>
            <person name="Amit I."/>
            <person name="Citri A."/>
            <person name="Shay T."/>
            <person name="Carvalho S."/>
            <person name="Lavi S."/>
            <person name="Milanezi F."/>
            <person name="Lyass L."/>
            <person name="Amariglio N."/>
            <person name="Jacob-Hirsch J."/>
            <person name="Ben-Chetrit N."/>
            <person name="Tarcic G."/>
            <person name="Lindzen M."/>
            <person name="Avraham R."/>
            <person name="Liao Y.C."/>
            <person name="Trusk P."/>
            <person name="Lyass A."/>
            <person name="Rechavi G."/>
            <person name="Spector N.L."/>
            <person name="Lo S.H."/>
            <person name="Schmitt F."/>
            <person name="Bacus S.S."/>
            <person name="Yarden Y."/>
        </authorList>
    </citation>
    <scope>FUNCTION</scope>
    <scope>INTERACTION WITH ITGB1</scope>
    <scope>SUBCELLULAR LOCATION</scope>
    <scope>INDUCTION</scope>
    <scope>MUTAGENESIS OF ARG-650</scope>
</reference>
<reference key="9">
    <citation type="journal article" date="2008" name="Mol. Cell">
        <title>Kinase-selective enrichment enables quantitative phosphoproteomics of the kinome across the cell cycle.</title>
        <authorList>
            <person name="Daub H."/>
            <person name="Olsen J.V."/>
            <person name="Bairlein M."/>
            <person name="Gnad F."/>
            <person name="Oppermann F.S."/>
            <person name="Korner R."/>
            <person name="Greff Z."/>
            <person name="Keri G."/>
            <person name="Stemmann O."/>
            <person name="Mann M."/>
        </authorList>
    </citation>
    <scope>PHOSPHORYLATION [LARGE SCALE ANALYSIS] AT SER-82 AND SER-248</scope>
    <scope>IDENTIFICATION BY MASS SPECTROMETRY [LARGE SCALE ANALYSIS]</scope>
    <source>
        <tissue>Cervix carcinoma</tissue>
    </source>
</reference>
<reference key="10">
    <citation type="journal article" date="2009" name="Cancer Res.">
        <title>Up-regulation of C-terminal tensin-like molecule promotes the tumorigenicity of colon cancer through beta-catenin.</title>
        <authorList>
            <person name="Liao Y.C."/>
            <person name="Chen N.T."/>
            <person name="Shih Y.P."/>
            <person name="Dong Y."/>
            <person name="Lo S.H."/>
        </authorList>
    </citation>
    <scope>TISSUE SPECIFICITY</scope>
    <scope>ROLE IN COLON CANCER CELLS</scope>
</reference>
<reference key="11">
    <citation type="journal article" date="2009" name="J. Pathol.">
        <title>C-terminal Tensin-like (CTEN) is an oncogene which alters cell motility possibly through repression of E-cadherin in colorectal cancer.</title>
        <authorList>
            <person name="Albasri A."/>
            <person name="Seth R."/>
            <person name="Jackson D."/>
            <person name="Benhasouna A."/>
            <person name="Crook S."/>
            <person name="Nateri A.S."/>
            <person name="Chapman R."/>
            <person name="Ilyas M."/>
        </authorList>
    </citation>
    <scope>TISSUE SPECIFICITY</scope>
    <scope>ROLE IN COLORECTAL CANCER CELLS</scope>
</reference>
<reference key="12">
    <citation type="journal article" date="2011" name="BMC Syst. Biol.">
        <title>Initial characterization of the human central proteome.</title>
        <authorList>
            <person name="Burkard T.R."/>
            <person name="Planyavsky M."/>
            <person name="Kaupe I."/>
            <person name="Breitwieser F.P."/>
            <person name="Buerckstuemmer T."/>
            <person name="Bennett K.L."/>
            <person name="Superti-Furga G."/>
            <person name="Colinge J."/>
        </authorList>
    </citation>
    <scope>IDENTIFICATION BY MASS SPECTROMETRY [LARGE SCALE ANALYSIS]</scope>
</reference>
<reference key="13">
    <citation type="journal article" date="2013" name="Cancer Res.">
        <title>CTEN prolongs signaling by EGFR through reducing its ligand-induced degradation.</title>
        <authorList>
            <person name="Hong S.Y."/>
            <person name="Shih Y.P."/>
            <person name="Li T."/>
            <person name="Carraway K.L. III"/>
            <person name="Lo S.H."/>
        </authorList>
    </citation>
    <scope>FUNCTION</scope>
    <scope>INTERACTION WITH CBL</scope>
    <scope>MUTAGENESIS OF ARG-474 AND ARG-650</scope>
</reference>
<reference key="14">
    <citation type="journal article" date="2014" name="Dev. Cell">
        <title>Tensin-4-dependent MET stabilization is essential for survival and proliferation in carcinoma cells.</title>
        <authorList>
            <person name="Muharram G."/>
            <person name="Sahgal P."/>
            <person name="Korpela T."/>
            <person name="De Franceschi N."/>
            <person name="Kaukonen R."/>
            <person name="Clark K."/>
            <person name="Tulasne D."/>
            <person name="Carpen O."/>
            <person name="Ivaska J."/>
        </authorList>
    </citation>
    <scope>FUNCTION</scope>
    <scope>INTERACTION WITH MET AND ITGB1</scope>
    <scope>SUBCELLULAR LOCATION</scope>
    <scope>MUTAGENESIS OF ARG-474</scope>
</reference>
<reference key="15">
    <citation type="journal article" date="2014" name="Dev. Cell">
        <authorList>
            <person name="Muharram G."/>
            <person name="Sahgal P."/>
            <person name="Korpela T."/>
            <person name="De Franceschi N."/>
            <person name="Kaukonen R."/>
            <person name="Clark K."/>
            <person name="Tulasne D."/>
            <person name="Carpen O."/>
            <person name="Ivaska J."/>
        </authorList>
    </citation>
    <scope>ERRATUM OF PUBMED:24814316</scope>
</reference>
<reference key="16">
    <citation type="journal article" date="2017" name="Mol. Carcinog.">
        <title>Cten promotes epithelial-mesenchymal transition through the post-transcriptional stabilization of Snail.</title>
        <authorList>
            <person name="Thorpe H."/>
            <person name="Asiri A."/>
            <person name="Akhlaq M."/>
            <person name="Ilyas M."/>
        </authorList>
    </citation>
    <scope>ROLE IN COLORECTAL CANCER CELLS</scope>
</reference>
<reference key="17">
    <citation type="journal article" date="2019" name="Biochim. Biophys. Acta">
        <title>Identification of subcellular targeting sequences of Cten reveals its role in cell proliferation.</title>
        <authorList>
            <person name="Hong S.Y."/>
            <person name="Shih Y.P."/>
            <person name="Lo A."/>
            <person name="Lo S.H."/>
        </authorList>
    </citation>
    <scope>ROLE IN CANCER CELLS</scope>
</reference>
<reference key="18">
    <citation type="journal article" date="2006" name="Science">
        <title>The consensus coding sequences of human breast and colorectal cancers.</title>
        <authorList>
            <person name="Sjoeblom T."/>
            <person name="Jones S."/>
            <person name="Wood L.D."/>
            <person name="Parsons D.W."/>
            <person name="Lin J."/>
            <person name="Barber T.D."/>
            <person name="Mandelker D."/>
            <person name="Leary R.J."/>
            <person name="Ptak J."/>
            <person name="Silliman N."/>
            <person name="Szabo S."/>
            <person name="Buckhaults P."/>
            <person name="Farrell C."/>
            <person name="Meeh P."/>
            <person name="Markowitz S.D."/>
            <person name="Willis J."/>
            <person name="Dawson D."/>
            <person name="Willson J.K.V."/>
            <person name="Gazdar A.F."/>
            <person name="Hartigan J."/>
            <person name="Wu L."/>
            <person name="Liu C."/>
            <person name="Parmigiani G."/>
            <person name="Park B.H."/>
            <person name="Bachman K.E."/>
            <person name="Papadopoulos N."/>
            <person name="Vogelstein B."/>
            <person name="Kinzler K.W."/>
            <person name="Velculescu V.E."/>
        </authorList>
    </citation>
    <scope>VARIANT [LARGE SCALE ANALYSIS] CYS-642</scope>
</reference>
<accession>Q8IZW8</accession>
<accession>A6NMJ7</accession>
<accession>Q71RB7</accession>
<accession>Q8WV64</accession>
<accession>Q96JV4</accession>
<gene>
    <name type="primary">TNS4</name>
    <name type="synonym">CTEN</name>
    <name type="ORF">PP14434</name>
</gene>
<protein>
    <recommendedName>
        <fullName>Tensin-4</fullName>
    </recommendedName>
    <alternativeName>
        <fullName>C-terminal tensin-like protein</fullName>
    </alternativeName>
</protein>
<sequence length="715" mass="76764">MSQVMSSPLLAGGHAVSLAPCDEPRRTLHPAPSPSLPPQCSYYTTEGWGAQALMAPVPCMGPPGRLQQAPQVEAKATCFLPSPGEKALGTPEDLDSYIDFSLESLNQMILELDPTFQLLPPGTGGSQAELAQSTMSMRKKEESEALDIKYIEVTSARSRCHDGPQHCSSPSVTPPFGSLRSGGLLLSRDVPRETRSSSESLIFSGNQGRGHQRPLPPSEGLSPRPPNSPSISIPCMGSKASSPHGLGSPLVASPRLEKRLGGLAPQRGSRISVLSASPVSDVSYMFGSSQSLLHSSNSSHQSSSRSLESPANSSSSLHSLGSVSLCTRPSDFQAPRNPTLTMGQPRTPHSPPLAKEHASSCPPSITNSMVDIPIVLINGCPEPGSSPPQRTPGHQNSVQPGAASPSNPCPATRSNSQTLSDAPFTTCPEGPARDMQPTMKFVMDTSKYWFKPNITREQAIELLRKEEPGAFVIRDSSSYRGSFGLALKVQEVPASAQSRPGEDSNDLIRHFLIESSAKGVHLKGADEEPYFGSLSAFVCQHSIMALALPCKLTIPQRELGGADGASDSTDSPASCQKKSAGCHTLYLSSVSVETLTGALAVQKAISTTFERDILPTPTVVHFKVTEQGITLTDVQRKVFFRRHYPLTTLRFCGMDPEQRKWQKYCKPSWIFGFVAKSQTEPQENVCHLFAEYDMVQPASQVIGLVTALLQDAERM</sequence>
<organism>
    <name type="scientific">Homo sapiens</name>
    <name type="common">Human</name>
    <dbReference type="NCBI Taxonomy" id="9606"/>
    <lineage>
        <taxon>Eukaryota</taxon>
        <taxon>Metazoa</taxon>
        <taxon>Chordata</taxon>
        <taxon>Craniata</taxon>
        <taxon>Vertebrata</taxon>
        <taxon>Euteleostomi</taxon>
        <taxon>Mammalia</taxon>
        <taxon>Eutheria</taxon>
        <taxon>Euarchontoglires</taxon>
        <taxon>Primates</taxon>
        <taxon>Haplorrhini</taxon>
        <taxon>Catarrhini</taxon>
        <taxon>Hominidae</taxon>
        <taxon>Homo</taxon>
    </lineage>
</organism>
<comment type="function">
    <text evidence="9 12 13">Promotes EGF-induced cell migration by displacing tensin TNS3 from the cytoplasmic tail of integrin ITGB1 which results in dissociation of TNS3 from focal adhesions, disassembly of actin stress fibers and initiation of cell migration (PubMed:17643115). Suppresses ligand-induced degradation of EGFR by reducing EGFR ubiquitination in the presence of EGF (PubMed:23774213). Increases MET protein stability by inhibiting MET endocytosis and subsequent lysosomal degradation which leads to increased cell survival, proliferation and migration (PubMed:24814316).</text>
</comment>
<comment type="subunit">
    <text evidence="8 9 12 13">Interacts (via SH2 domain) with Rho GTPase-activating protein DLC1 (via C-terminus); the interaction is independent of DLC1 tyrosine phosphorylation (PubMed:17190795). Interacts with integrin ITGB1; the interaction displaces tensin TNS3 from the ITGB1 cytoplasmic tail and promotes ITGB1 stability (PubMed:17643115, PubMed:24814316). Interacts (via SH2 domain) with E3 ubiquitin-protein ligase CBL (phosphorylated on 'Tyr-774'); the interaction is enhanced in the presence of EGF and reduces interaction of CBL with EGFR (PubMed:23774213). Interacts (via SH2 domain) with receptor tyrosine kinase MET (when phosphorylated); the interaction increases MET protein stability (PubMed:24814316).</text>
</comment>
<comment type="interaction">
    <interactant intactId="EBI-7543499">
        <id>Q8IZW8</id>
    </interactant>
    <interactant intactId="EBI-11530605">
        <id>Q9H257-2</id>
        <label>CARD9</label>
    </interactant>
    <organismsDiffer>false</organismsDiffer>
    <experiments>3</experiments>
</comment>
<comment type="interaction">
    <interactant intactId="EBI-7543499">
        <id>Q8IZW8</id>
    </interactant>
    <interactant intactId="EBI-3867333">
        <id>A8MQ03</id>
        <label>CYSRT1</label>
    </interactant>
    <organismsDiffer>false</organismsDiffer>
    <experiments>3</experiments>
</comment>
<comment type="interaction">
    <interactant intactId="EBI-7543499">
        <id>Q8IZW8</id>
    </interactant>
    <interactant intactId="EBI-297353">
        <id>P00533</id>
        <label>EGFR</label>
    </interactant>
    <organismsDiffer>false</organismsDiffer>
    <experiments>2</experiments>
</comment>
<comment type="interaction">
    <interactant intactId="EBI-7543499">
        <id>Q8IZW8</id>
    </interactant>
    <interactant intactId="EBI-7116203">
        <id>O75031</id>
        <label>HSF2BP</label>
    </interactant>
    <organismsDiffer>false</organismsDiffer>
    <experiments>3</experiments>
</comment>
<comment type="interaction">
    <interactant intactId="EBI-7543499">
        <id>Q8IZW8</id>
    </interactant>
    <interactant intactId="EBI-12024294">
        <id>Q674X7-2</id>
        <label>KAZN</label>
    </interactant>
    <organismsDiffer>false</organismsDiffer>
    <experiments>3</experiments>
</comment>
<comment type="interaction">
    <interactant intactId="EBI-7543499">
        <id>Q8IZW8</id>
    </interactant>
    <interactant intactId="EBI-357318">
        <id>Q9NWS0</id>
        <label>PIH1D1</label>
    </interactant>
    <organismsDiffer>false</organismsDiffer>
    <experiments>3</experiments>
</comment>
<comment type="interaction">
    <interactant intactId="EBI-7543499">
        <id>Q8IZW8</id>
    </interactant>
    <interactant intactId="EBI-11959013">
        <id>Q08209-2</id>
        <label>PPP3CA</label>
    </interactant>
    <organismsDiffer>false</organismsDiffer>
    <experiments>5</experiments>
</comment>
<comment type="interaction">
    <interactant intactId="EBI-7543499">
        <id>Q8IZW8</id>
    </interactant>
    <interactant intactId="EBI-447043">
        <id>Q15276</id>
        <label>RABEP1</label>
    </interactant>
    <organismsDiffer>false</organismsDiffer>
    <experiments>3</experiments>
</comment>
<comment type="interaction">
    <interactant intactId="EBI-7543499">
        <id>Q8IZW8</id>
    </interactant>
    <interactant intactId="EBI-81290">
        <id>P19474</id>
        <label>TRIM21</label>
    </interactant>
    <organismsDiffer>false</organismsDiffer>
    <experiments>3</experiments>
</comment>
<comment type="interaction">
    <interactant intactId="EBI-7543499">
        <id>Q8IZW8</id>
    </interactant>
    <interactant intactId="EBI-719493">
        <id>P14373</id>
        <label>TRIM27</label>
    </interactant>
    <organismsDiffer>false</organismsDiffer>
    <experiments>3</experiments>
</comment>
<comment type="interaction">
    <interactant intactId="EBI-7543499">
        <id>Q8IZW8</id>
    </interactant>
    <interactant intactId="EBI-7877438">
        <id>P42681</id>
        <label>TXK</label>
    </interactant>
    <organismsDiffer>false</organismsDiffer>
    <experiments>3</experiments>
</comment>
<comment type="interaction">
    <interactant intactId="EBI-7543499">
        <id>Q8IZW8</id>
    </interactant>
    <interactant intactId="EBI-527853">
        <id>Q9UGI0</id>
        <label>ZRANB1</label>
    </interactant>
    <organismsDiffer>false</organismsDiffer>
    <experiments>3</experiments>
</comment>
<comment type="subcellular location">
    <subcellularLocation>
        <location evidence="4 8 9 13">Cell junction</location>
        <location evidence="4 8 9 13">Focal adhesion</location>
    </subcellularLocation>
    <subcellularLocation>
        <location evidence="4">Cytoplasm</location>
        <location evidence="4">Cytoskeleton</location>
    </subcellularLocation>
</comment>
<comment type="tissue specificity">
    <text evidence="4 10 11">Expressed at low levels in colon (at protein level) (PubMed:19214987, PubMed:19487278). Expressed in prostate and placenta (PubMed:12154022).</text>
</comment>
<comment type="induction">
    <text evidence="9">By EGF.</text>
</comment>
<comment type="PTM">
    <text evidence="6">Proteolytically cleaved by caspase-3 during apoptosis.</text>
</comment>
<comment type="miscellaneous">
    <text evidence="4 10 11 12 13 14 15">Expression is up-regulated in tumors from a variety of tissues including lung, breast, colon, pancreas, stomach and ovary but is down-regulated in prostate cancer (PubMed:12154022, PubMed:19487278, PubMed:23774213, PubMed:24814316). In colorectal cancer cells, induces epithelial-mesenchymal transition (EMT) accompanied by down-regulation of CDH1/E-cadherin protein levels and increased cell migration (PubMed:19214987). Contributes to cell motility in colorectal cancer cells by promoting EMT through its role in the post-transcriptional stabilization of SNAIL in an SH2-dependent manner which leads to increased cell migration (PubMed:28691764). Detected in the nucleus in colon cancer cells where it interacts with CTNNB1/beta-catenin and modulates colony formation, anchorage-independent growth and cell invasiveness (PubMed:19487278, PubMed:30321615). Also detected in the nucleus in other cancer cells such as lung and cervical cancer cells where it promotes cell proliferation (PubMed:30321615).</text>
</comment>
<comment type="similarity">
    <text evidence="16">Belongs to the PTEN phosphatase protein family.</text>
</comment>
<comment type="sequence caution" evidence="16">
    <conflict type="frameshift">
        <sequence resource="EMBL-CDS" id="AAQ15257"/>
    </conflict>
</comment>
<comment type="online information" name="Atlas of Genetics and Cytogenetics in Oncology and Haematology">
    <link uri="https://atlasgeneticsoncology.org/gene/40190/TNS4"/>
</comment>
<name>TENS4_HUMAN</name>
<keyword id="KW-0009">Actin-binding</keyword>
<keyword id="KW-0965">Cell junction</keyword>
<keyword id="KW-0963">Cytoplasm</keyword>
<keyword id="KW-0206">Cytoskeleton</keyword>
<keyword id="KW-0597">Phosphoprotein</keyword>
<keyword id="KW-1267">Proteomics identification</keyword>
<keyword id="KW-1185">Reference proteome</keyword>
<keyword id="KW-0727">SH2 domain</keyword>
<keyword id="KW-0732">Signal</keyword>